<keyword id="KW-1185">Reference proteome</keyword>
<keyword id="KW-0677">Repeat</keyword>
<keyword id="KW-0964">Secreted</keyword>
<keyword id="KW-0732">Signal</keyword>
<feature type="signal peptide" evidence="2">
    <location>
        <begin position="1"/>
        <end position="23"/>
    </location>
</feature>
<feature type="chain" id="PRO_0000032364" description="Semenogelin-2">
    <location>
        <begin position="24"/>
        <end position="582"/>
    </location>
</feature>
<feature type="region of interest" description="Disordered" evidence="3">
    <location>
        <begin position="25"/>
        <end position="62"/>
    </location>
</feature>
<feature type="region of interest" description="Disordered" evidence="3">
    <location>
        <begin position="131"/>
        <end position="156"/>
    </location>
</feature>
<feature type="region of interest" description="Disordered" evidence="3">
    <location>
        <begin position="173"/>
        <end position="192"/>
    </location>
</feature>
<feature type="region of interest" description="Disordered" evidence="3">
    <location>
        <begin position="272"/>
        <end position="477"/>
    </location>
</feature>
<feature type="region of interest" description="Disordered" evidence="3">
    <location>
        <begin position="502"/>
        <end position="554"/>
    </location>
</feature>
<feature type="compositionally biased region" description="Basic and acidic residues" evidence="3">
    <location>
        <begin position="50"/>
        <end position="59"/>
    </location>
</feature>
<feature type="compositionally biased region" description="Polar residues" evidence="3">
    <location>
        <begin position="137"/>
        <end position="151"/>
    </location>
</feature>
<feature type="compositionally biased region" description="Polar residues" evidence="3">
    <location>
        <begin position="174"/>
        <end position="192"/>
    </location>
</feature>
<feature type="compositionally biased region" description="Basic and acidic residues" evidence="3">
    <location>
        <begin position="292"/>
        <end position="310"/>
    </location>
</feature>
<feature type="compositionally biased region" description="Polar residues" evidence="3">
    <location>
        <begin position="325"/>
        <end position="335"/>
    </location>
</feature>
<feature type="compositionally biased region" description="Basic and acidic residues" evidence="3">
    <location>
        <begin position="336"/>
        <end position="345"/>
    </location>
</feature>
<feature type="compositionally biased region" description="Polar residues" evidence="3">
    <location>
        <begin position="385"/>
        <end position="395"/>
    </location>
</feature>
<feature type="compositionally biased region" description="Basic and acidic residues" evidence="3">
    <location>
        <begin position="396"/>
        <end position="405"/>
    </location>
</feature>
<feature type="compositionally biased region" description="Polar residues" evidence="3">
    <location>
        <begin position="445"/>
        <end position="455"/>
    </location>
</feature>
<feature type="compositionally biased region" description="Basic and acidic residues" evidence="3">
    <location>
        <begin position="456"/>
        <end position="465"/>
    </location>
</feature>
<feature type="compositionally biased region" description="Polar residues" evidence="3">
    <location>
        <begin position="466"/>
        <end position="477"/>
    </location>
</feature>
<feature type="compositionally biased region" description="Polar residues" evidence="3">
    <location>
        <begin position="506"/>
        <end position="529"/>
    </location>
</feature>
<feature type="compositionally biased region" description="Basic and acidic residues" evidence="3">
    <location>
        <begin position="537"/>
        <end position="546"/>
    </location>
</feature>
<gene>
    <name type="primary">SEMG2</name>
</gene>
<sequence>MKSIILFVLSLLLILEKQAAVMGQKGGSKGQLSSGSSRFPHRHRSQHYSGQKDKQHTESKGSFSIQHTYHVDANDHDRTRKSQQYYLNAQHKTTKSKQHLRRRQRLLNYKQKGRGRVKPKRHFHLIVIHRKGGQVHHGTQNPSQDQGNSPSGKGIFRQYSNTEKRLWVHGLSKEQASASGAQKGRTQGGSQSSYVLQTEELVVNKQQLETKNSHQNKGHYQNVVDVREEHSGKLQTSLHPAHQDRLQHGPKDIFTTQDELLVYNKNQHQTKNLNQDQEHGQKAHKISYQSSRTEERQLNHGEKSVQKDVSKGSISIQTEEKIHGKSQNQVTIPSQDQEHGHKENKISYQSSSAEERRLNSGEKGIQKGVXKGSISIQTEEKIYGKSQNQVTIPSQDQEHGHKENKISYQSSSAEERRLNSGEKGIQKGVXKGSISIQTEEKIYGKSQNQVTIPSQDQEHGHKENKISYQSSSTEQRQLNYGRKSIQKDVIQSSLSFQTEKLVEGKSQIQTPNPNQGQWSGQNAKGNSGKSADGEQDLLSHEQEGRYQQEFSGAHNTVNIEHEVAYDDLLTQQYNEDRNPIST</sequence>
<proteinExistence type="evidence at transcript level"/>
<name>SEMG2_MACNE</name>
<reference key="1">
    <citation type="journal article" date="2004" name="Nat. Genet.">
        <title>Rate of molecular evolution of the seminal protein gene SEMG2 correlates with levels of female promiscuity.</title>
        <authorList>
            <person name="Dorus S."/>
            <person name="Evans P.D."/>
            <person name="Wyckoff G.J."/>
            <person name="Choi S.S."/>
            <person name="Lahn B.T."/>
        </authorList>
    </citation>
    <scope>NUCLEOTIDE SEQUENCE [MRNA]</scope>
</reference>
<organism>
    <name type="scientific">Macaca nemestrina</name>
    <name type="common">Pig-tailed macaque</name>
    <dbReference type="NCBI Taxonomy" id="9545"/>
    <lineage>
        <taxon>Eukaryota</taxon>
        <taxon>Metazoa</taxon>
        <taxon>Chordata</taxon>
        <taxon>Craniata</taxon>
        <taxon>Vertebrata</taxon>
        <taxon>Euteleostomi</taxon>
        <taxon>Mammalia</taxon>
        <taxon>Eutheria</taxon>
        <taxon>Euarchontoglires</taxon>
        <taxon>Primates</taxon>
        <taxon>Haplorrhini</taxon>
        <taxon>Catarrhini</taxon>
        <taxon>Cercopithecidae</taxon>
        <taxon>Cercopithecinae</taxon>
        <taxon>Macaca</taxon>
    </lineage>
</organism>
<accession>Q5U7M9</accession>
<comment type="function">
    <text evidence="1">Participates in the formation of a gel matrix (sperm coagulum) entrapping the accessory gland secretions and ejaculated spermatozoa.</text>
</comment>
<comment type="subunit">
    <text evidence="1">Interacts with SERPINA5.</text>
</comment>
<comment type="subcellular location">
    <subcellularLocation>
        <location evidence="1">Secreted</location>
    </subcellularLocation>
</comment>
<comment type="similarity">
    <text evidence="4">Belongs to the semenogelin family.</text>
</comment>
<evidence type="ECO:0000250" key="1"/>
<evidence type="ECO:0000255" key="2"/>
<evidence type="ECO:0000256" key="3">
    <source>
        <dbReference type="SAM" id="MobiDB-lite"/>
    </source>
</evidence>
<evidence type="ECO:0000305" key="4"/>
<protein>
    <recommendedName>
        <fullName>Semenogelin-2</fullName>
    </recommendedName>
    <alternativeName>
        <fullName>Semenogelin II</fullName>
        <shortName>SGII</shortName>
    </alternativeName>
</protein>
<dbReference type="EMBL" id="AY781391">
    <property type="protein sequence ID" value="AAV51949.1"/>
    <property type="molecule type" value="mRNA"/>
</dbReference>
<dbReference type="RefSeq" id="NP_001295937.1">
    <property type="nucleotide sequence ID" value="NM_001309008.1"/>
</dbReference>
<dbReference type="STRING" id="9545.ENSMNEP00000022417"/>
<dbReference type="GeneID" id="105496431"/>
<dbReference type="CTD" id="6407"/>
<dbReference type="Proteomes" id="UP000233120">
    <property type="component" value="Unassembled WGS sequence"/>
</dbReference>
<dbReference type="GO" id="GO:0070062">
    <property type="term" value="C:extracellular exosome"/>
    <property type="evidence" value="ECO:0007669"/>
    <property type="project" value="TreeGrafter"/>
</dbReference>
<dbReference type="GO" id="GO:0050817">
    <property type="term" value="P:coagulation"/>
    <property type="evidence" value="ECO:0007669"/>
    <property type="project" value="InterPro"/>
</dbReference>
<dbReference type="GO" id="GO:1901318">
    <property type="term" value="P:negative regulation of flagellated sperm motility"/>
    <property type="evidence" value="ECO:0007669"/>
    <property type="project" value="InterPro"/>
</dbReference>
<dbReference type="GO" id="GO:0048240">
    <property type="term" value="P:sperm capacitation"/>
    <property type="evidence" value="ECO:0007669"/>
    <property type="project" value="TreeGrafter"/>
</dbReference>
<dbReference type="InterPro" id="IPR008836">
    <property type="entry name" value="Semenogelin"/>
</dbReference>
<dbReference type="PANTHER" id="PTHR10547:SF6">
    <property type="entry name" value="SEMENOGELIN-2"/>
    <property type="match status" value="1"/>
</dbReference>
<dbReference type="PANTHER" id="PTHR10547">
    <property type="entry name" value="SEMENOGELIN/SEMINAL VESICLE SECRETORY PROTEIN"/>
    <property type="match status" value="1"/>
</dbReference>
<dbReference type="Pfam" id="PF05474">
    <property type="entry name" value="Semenogelin"/>
    <property type="match status" value="1"/>
</dbReference>